<gene>
    <name type="primary">DI19-4</name>
    <name type="ordered locus">Os02g0304900</name>
    <name type="ordered locus">LOC_Os02g20170</name>
    <name type="ORF">OsJ_006199</name>
    <name evidence="2" type="ORF">OsJ_06388</name>
    <name type="ORF">P0572A04.25</name>
</gene>
<accession>Q6H6E6</accession>
<accession>A3A5X7</accession>
<accession>B7E413</accession>
<comment type="similarity">
    <text evidence="1">Belongs to the Di19 family.</text>
</comment>
<proteinExistence type="evidence at transcript level"/>
<protein>
    <recommendedName>
        <fullName>Protein DEHYDRATION-INDUCED 19 homolog 4</fullName>
    </recommendedName>
    <alternativeName>
        <fullName>OsDi19-4</fullName>
    </alternativeName>
</protein>
<name>DI194_ORYSJ</name>
<sequence length="245" mass="27684">MDSDHWISRLMAAKRQYALQRAQNHHHATATATATAASHSHLDRYGYDDVEPEDEVRPDFPCPYCYEDHDITSLCAHLEDEHPFESKVVACPVCSARISKDLLDHITLQHSYLFRLQRHHRLRRVAVPSNHALSLGGRDLQETYLKVLLGNSSRSSGTNAASSVTDSLLSSLVLNLSSSEAEDTAKFSALAVVENNWFKRTLPSKTWKASSDSNLSQEERERRRRRAAVRSSFVQHLLVSTLFDD</sequence>
<dbReference type="EMBL" id="AP005009">
    <property type="protein sequence ID" value="BAD25703.1"/>
    <property type="molecule type" value="Genomic_DNA"/>
</dbReference>
<dbReference type="EMBL" id="AP008208">
    <property type="protein sequence ID" value="BAF08547.1"/>
    <property type="molecule type" value="Genomic_DNA"/>
</dbReference>
<dbReference type="EMBL" id="AP014958">
    <property type="protein sequence ID" value="BAS78280.1"/>
    <property type="molecule type" value="Genomic_DNA"/>
</dbReference>
<dbReference type="EMBL" id="CM000139">
    <property type="protein sequence ID" value="EEE56801.1"/>
    <property type="molecule type" value="Genomic_DNA"/>
</dbReference>
<dbReference type="EMBL" id="AK059764">
    <property type="protein sequence ID" value="BAG87110.1"/>
    <property type="molecule type" value="mRNA"/>
</dbReference>
<dbReference type="EMBL" id="AK099304">
    <property type="protein sequence ID" value="BAG94053.1"/>
    <property type="molecule type" value="mRNA"/>
</dbReference>
<dbReference type="RefSeq" id="XP_015622706.1">
    <property type="nucleotide sequence ID" value="XM_015767220.1"/>
</dbReference>
<dbReference type="STRING" id="39947.Q6H6E6"/>
<dbReference type="PaxDb" id="39947-Q6H6E6"/>
<dbReference type="EnsemblPlants" id="Os02t0304900-01">
    <property type="protein sequence ID" value="Os02t0304900-01"/>
    <property type="gene ID" value="Os02g0304900"/>
</dbReference>
<dbReference type="Gramene" id="Os02t0304900-01">
    <property type="protein sequence ID" value="Os02t0304900-01"/>
    <property type="gene ID" value="Os02g0304900"/>
</dbReference>
<dbReference type="KEGG" id="dosa:Os02g0304900"/>
<dbReference type="eggNOG" id="ENOG502QVUG">
    <property type="taxonomic scope" value="Eukaryota"/>
</dbReference>
<dbReference type="HOGENOM" id="CLU_072240_0_0_1"/>
<dbReference type="InParanoid" id="Q6H6E6"/>
<dbReference type="OMA" id="LWISRLM"/>
<dbReference type="OrthoDB" id="7873042at2759"/>
<dbReference type="Proteomes" id="UP000000763">
    <property type="component" value="Chromosome 2"/>
</dbReference>
<dbReference type="Proteomes" id="UP000007752">
    <property type="component" value="Chromosome 2"/>
</dbReference>
<dbReference type="Proteomes" id="UP000059680">
    <property type="component" value="Chromosome 2"/>
</dbReference>
<dbReference type="InterPro" id="IPR033347">
    <property type="entry name" value="DI19"/>
</dbReference>
<dbReference type="InterPro" id="IPR027935">
    <property type="entry name" value="Di19_C"/>
</dbReference>
<dbReference type="InterPro" id="IPR008598">
    <property type="entry name" value="Di19_Zn-bd"/>
</dbReference>
<dbReference type="PANTHER" id="PTHR31875">
    <property type="entry name" value="PROTEIN DEHYDRATION-INDUCED 19"/>
    <property type="match status" value="1"/>
</dbReference>
<dbReference type="PANTHER" id="PTHR31875:SF31">
    <property type="entry name" value="PROTEIN DEHYDRATION-INDUCED 19 HOMOLOG 4"/>
    <property type="match status" value="1"/>
</dbReference>
<dbReference type="Pfam" id="PF14571">
    <property type="entry name" value="Di19_C"/>
    <property type="match status" value="1"/>
</dbReference>
<dbReference type="Pfam" id="PF05605">
    <property type="entry name" value="zf-Di19"/>
    <property type="match status" value="1"/>
</dbReference>
<evidence type="ECO:0000305" key="1"/>
<evidence type="ECO:0000312" key="2">
    <source>
        <dbReference type="EMBL" id="EEE56801.1"/>
    </source>
</evidence>
<keyword id="KW-1185">Reference proteome</keyword>
<organism>
    <name type="scientific">Oryza sativa subsp. japonica</name>
    <name type="common">Rice</name>
    <dbReference type="NCBI Taxonomy" id="39947"/>
    <lineage>
        <taxon>Eukaryota</taxon>
        <taxon>Viridiplantae</taxon>
        <taxon>Streptophyta</taxon>
        <taxon>Embryophyta</taxon>
        <taxon>Tracheophyta</taxon>
        <taxon>Spermatophyta</taxon>
        <taxon>Magnoliopsida</taxon>
        <taxon>Liliopsida</taxon>
        <taxon>Poales</taxon>
        <taxon>Poaceae</taxon>
        <taxon>BOP clade</taxon>
        <taxon>Oryzoideae</taxon>
        <taxon>Oryzeae</taxon>
        <taxon>Oryzinae</taxon>
        <taxon>Oryza</taxon>
        <taxon>Oryza sativa</taxon>
    </lineage>
</organism>
<reference key="1">
    <citation type="journal article" date="2005" name="Nature">
        <title>The map-based sequence of the rice genome.</title>
        <authorList>
            <consortium name="International rice genome sequencing project (IRGSP)"/>
        </authorList>
    </citation>
    <scope>NUCLEOTIDE SEQUENCE [LARGE SCALE GENOMIC DNA]</scope>
    <source>
        <strain>cv. Nipponbare</strain>
    </source>
</reference>
<reference key="2">
    <citation type="journal article" date="2008" name="Nucleic Acids Res.">
        <title>The rice annotation project database (RAP-DB): 2008 update.</title>
        <authorList>
            <consortium name="The rice annotation project (RAP)"/>
        </authorList>
    </citation>
    <scope>GENOME REANNOTATION</scope>
    <source>
        <strain>cv. Nipponbare</strain>
    </source>
</reference>
<reference key="3">
    <citation type="journal article" date="2013" name="Rice">
        <title>Improvement of the Oryza sativa Nipponbare reference genome using next generation sequence and optical map data.</title>
        <authorList>
            <person name="Kawahara Y."/>
            <person name="de la Bastide M."/>
            <person name="Hamilton J.P."/>
            <person name="Kanamori H."/>
            <person name="McCombie W.R."/>
            <person name="Ouyang S."/>
            <person name="Schwartz D.C."/>
            <person name="Tanaka T."/>
            <person name="Wu J."/>
            <person name="Zhou S."/>
            <person name="Childs K.L."/>
            <person name="Davidson R.M."/>
            <person name="Lin H."/>
            <person name="Quesada-Ocampo L."/>
            <person name="Vaillancourt B."/>
            <person name="Sakai H."/>
            <person name="Lee S.S."/>
            <person name="Kim J."/>
            <person name="Numa H."/>
            <person name="Itoh T."/>
            <person name="Buell C.R."/>
            <person name="Matsumoto T."/>
        </authorList>
    </citation>
    <scope>GENOME REANNOTATION</scope>
    <source>
        <strain>cv. Nipponbare</strain>
    </source>
</reference>
<reference key="4">
    <citation type="journal article" date="2005" name="PLoS Biol.">
        <title>The genomes of Oryza sativa: a history of duplications.</title>
        <authorList>
            <person name="Yu J."/>
            <person name="Wang J."/>
            <person name="Lin W."/>
            <person name="Li S."/>
            <person name="Li H."/>
            <person name="Zhou J."/>
            <person name="Ni P."/>
            <person name="Dong W."/>
            <person name="Hu S."/>
            <person name="Zeng C."/>
            <person name="Zhang J."/>
            <person name="Zhang Y."/>
            <person name="Li R."/>
            <person name="Xu Z."/>
            <person name="Li S."/>
            <person name="Li X."/>
            <person name="Zheng H."/>
            <person name="Cong L."/>
            <person name="Lin L."/>
            <person name="Yin J."/>
            <person name="Geng J."/>
            <person name="Li G."/>
            <person name="Shi J."/>
            <person name="Liu J."/>
            <person name="Lv H."/>
            <person name="Li J."/>
            <person name="Wang J."/>
            <person name="Deng Y."/>
            <person name="Ran L."/>
            <person name="Shi X."/>
            <person name="Wang X."/>
            <person name="Wu Q."/>
            <person name="Li C."/>
            <person name="Ren X."/>
            <person name="Wang J."/>
            <person name="Wang X."/>
            <person name="Li D."/>
            <person name="Liu D."/>
            <person name="Zhang X."/>
            <person name="Ji Z."/>
            <person name="Zhao W."/>
            <person name="Sun Y."/>
            <person name="Zhang Z."/>
            <person name="Bao J."/>
            <person name="Han Y."/>
            <person name="Dong L."/>
            <person name="Ji J."/>
            <person name="Chen P."/>
            <person name="Wu S."/>
            <person name="Liu J."/>
            <person name="Xiao Y."/>
            <person name="Bu D."/>
            <person name="Tan J."/>
            <person name="Yang L."/>
            <person name="Ye C."/>
            <person name="Zhang J."/>
            <person name="Xu J."/>
            <person name="Zhou Y."/>
            <person name="Yu Y."/>
            <person name="Zhang B."/>
            <person name="Zhuang S."/>
            <person name="Wei H."/>
            <person name="Liu B."/>
            <person name="Lei M."/>
            <person name="Yu H."/>
            <person name="Li Y."/>
            <person name="Xu H."/>
            <person name="Wei S."/>
            <person name="He X."/>
            <person name="Fang L."/>
            <person name="Zhang Z."/>
            <person name="Zhang Y."/>
            <person name="Huang X."/>
            <person name="Su Z."/>
            <person name="Tong W."/>
            <person name="Li J."/>
            <person name="Tong Z."/>
            <person name="Li S."/>
            <person name="Ye J."/>
            <person name="Wang L."/>
            <person name="Fang L."/>
            <person name="Lei T."/>
            <person name="Chen C.-S."/>
            <person name="Chen H.-C."/>
            <person name="Xu Z."/>
            <person name="Li H."/>
            <person name="Huang H."/>
            <person name="Zhang F."/>
            <person name="Xu H."/>
            <person name="Li N."/>
            <person name="Zhao C."/>
            <person name="Li S."/>
            <person name="Dong L."/>
            <person name="Huang Y."/>
            <person name="Li L."/>
            <person name="Xi Y."/>
            <person name="Qi Q."/>
            <person name="Li W."/>
            <person name="Zhang B."/>
            <person name="Hu W."/>
            <person name="Zhang Y."/>
            <person name="Tian X."/>
            <person name="Jiao Y."/>
            <person name="Liang X."/>
            <person name="Jin J."/>
            <person name="Gao L."/>
            <person name="Zheng W."/>
            <person name="Hao B."/>
            <person name="Liu S.-M."/>
            <person name="Wang W."/>
            <person name="Yuan L."/>
            <person name="Cao M."/>
            <person name="McDermott J."/>
            <person name="Samudrala R."/>
            <person name="Wang J."/>
            <person name="Wong G.K.-S."/>
            <person name="Yang H."/>
        </authorList>
    </citation>
    <scope>NUCLEOTIDE SEQUENCE [LARGE SCALE GENOMIC DNA]</scope>
    <source>
        <strain>cv. Nipponbare</strain>
    </source>
</reference>
<reference key="5">
    <citation type="journal article" date="2003" name="Science">
        <title>Collection, mapping, and annotation of over 28,000 cDNA clones from japonica rice.</title>
        <authorList>
            <consortium name="The rice full-length cDNA consortium"/>
        </authorList>
    </citation>
    <scope>NUCLEOTIDE SEQUENCE [LARGE SCALE MRNA]</scope>
    <source>
        <strain>cv. Nipponbare</strain>
    </source>
</reference>
<reference key="6">
    <citation type="journal article" date="2006" name="Plant Mol. Biol.">
        <title>The Arabidopsis AtDi19 gene family encodes a novel type of Cys2/His2 zinc-finger protein implicated in ABA-independent dehydration, high-salinity stress and light signaling pathways.</title>
        <authorList>
            <person name="Rodriguez Milla M.A."/>
            <person name="Townsend J."/>
            <person name="Chang I.-F."/>
            <person name="Cushman J.C."/>
        </authorList>
    </citation>
    <scope>GENE FAMILY</scope>
    <scope>NOMENCLATURE</scope>
</reference>
<feature type="chain" id="PRO_0000304423" description="Protein DEHYDRATION-INDUCED 19 homolog 4">
    <location>
        <begin position="1"/>
        <end position="245"/>
    </location>
</feature>